<sequence length="82" mass="8898">MVLAVDLLNPSPASEARKHKLKTLVPAPRSFFMDVKCPGCFTITTVFSHAQTVVICQGCTTVLCQPTGGKARLTEGCSFRRK</sequence>
<proteinExistence type="evidence at protein level"/>
<name>RS27_NEUCR</name>
<feature type="chain" id="PRO_0000260174" description="Small ribosomal subunit protein eS27">
    <location>
        <begin position="1"/>
        <end position="82"/>
    </location>
</feature>
<feature type="zinc finger region" description="C4-type" evidence="1">
    <location>
        <begin position="37"/>
        <end position="59"/>
    </location>
</feature>
<comment type="function">
    <text evidence="5">Component of the ribosome, a large ribonucleoprotein complex responsible for the synthesis of proteins in the cell. The small ribosomal subunit (SSU) binds messenger RNAs (mRNAs) and translates the encoded message by selecting cognate aminoacyl-transfer RNA (tRNA) molecules. The large subunit (LSU) contains the ribosomal catalytic site termed the peptidyl transferase center (PTC), which catalyzes the formation of peptide bonds, thereby polymerizing the amino acids delivered by tRNAs into a polypeptide chain. The nascent polypeptides leave the ribosome through a tunnel in the LSU and interact with protein factors that function in enzymatic processing, targeting, and the membrane insertion of nascent chains at the exit of the ribosomal tunnel.</text>
</comment>
<comment type="cofactor">
    <cofactor evidence="4">
        <name>Zn(2+)</name>
        <dbReference type="ChEBI" id="CHEBI:29105"/>
    </cofactor>
    <text evidence="4">Binds 1 zinc ion per subunit.</text>
</comment>
<comment type="subunit">
    <text evidence="2">Component of the small ribosomal subunit (SSU). Mature N.crassa ribosomes consist of a small (40S) and a large (60S) subunit. The 40S small subunit contains 1 molecule of ribosomal RNA (18S rRNA) and at least 32 different proteins. The large 60S subunit contains 3 rRNA molecules (26S, 5.8S and 5S rRNA) and at least 42 different proteins.</text>
</comment>
<comment type="subcellular location">
    <subcellularLocation>
        <location evidence="2">Cytoplasm</location>
    </subcellularLocation>
</comment>
<comment type="similarity">
    <text evidence="4">Belongs to the eukaryotic ribosomal protein eS27 family.</text>
</comment>
<evidence type="ECO:0000255" key="1"/>
<evidence type="ECO:0000269" key="2">
    <source>
    </source>
</evidence>
<evidence type="ECO:0000303" key="3">
    <source>
    </source>
</evidence>
<evidence type="ECO:0000305" key="4"/>
<evidence type="ECO:0000305" key="5">
    <source>
    </source>
</evidence>
<evidence type="ECO:0007744" key="6">
    <source>
        <dbReference type="PDB" id="7R81"/>
    </source>
</evidence>
<accession>Q7RVN2</accession>
<gene>
    <name type="primary">crp-6</name>
    <name type="synonym">rps27</name>
    <name type="ORF">NCU00618</name>
</gene>
<dbReference type="EMBL" id="CM002236">
    <property type="protein sequence ID" value="EAA36522.1"/>
    <property type="molecule type" value="Genomic_DNA"/>
</dbReference>
<dbReference type="RefSeq" id="XP_965758.1">
    <property type="nucleotide sequence ID" value="XM_960665.3"/>
</dbReference>
<dbReference type="PDB" id="7R81">
    <property type="method" value="EM"/>
    <property type="resolution" value="2.70 A"/>
    <property type="chains" value="c2=1-82"/>
</dbReference>
<dbReference type="PDBsum" id="7R81"/>
<dbReference type="EMDB" id="EMD-24307"/>
<dbReference type="SMR" id="Q7RVN2"/>
<dbReference type="FunCoup" id="Q7RVN2">
    <property type="interactions" value="809"/>
</dbReference>
<dbReference type="STRING" id="367110.Q7RVN2"/>
<dbReference type="PaxDb" id="5141-EFNCRP00000000681"/>
<dbReference type="EnsemblFungi" id="EAA36522">
    <property type="protein sequence ID" value="EAA36522"/>
    <property type="gene ID" value="NCU00618"/>
</dbReference>
<dbReference type="GeneID" id="3881915"/>
<dbReference type="KEGG" id="ncr:NCU00618"/>
<dbReference type="VEuPathDB" id="FungiDB:NCU00618"/>
<dbReference type="HOGENOM" id="CLU_130128_3_0_1"/>
<dbReference type="InParanoid" id="Q7RVN2"/>
<dbReference type="OrthoDB" id="5567124at2759"/>
<dbReference type="Proteomes" id="UP000001805">
    <property type="component" value="Chromosome 1, Linkage Group I"/>
</dbReference>
<dbReference type="GO" id="GO:0022627">
    <property type="term" value="C:cytosolic small ribosomal subunit"/>
    <property type="evidence" value="ECO:0000318"/>
    <property type="project" value="GO_Central"/>
</dbReference>
<dbReference type="GO" id="GO:0003723">
    <property type="term" value="F:RNA binding"/>
    <property type="evidence" value="ECO:0000318"/>
    <property type="project" value="GO_Central"/>
</dbReference>
<dbReference type="GO" id="GO:0003735">
    <property type="term" value="F:structural constituent of ribosome"/>
    <property type="evidence" value="ECO:0000318"/>
    <property type="project" value="GO_Central"/>
</dbReference>
<dbReference type="GO" id="GO:0008270">
    <property type="term" value="F:zinc ion binding"/>
    <property type="evidence" value="ECO:0007669"/>
    <property type="project" value="UniProtKB-KW"/>
</dbReference>
<dbReference type="GO" id="GO:0000028">
    <property type="term" value="P:ribosomal small subunit assembly"/>
    <property type="evidence" value="ECO:0000318"/>
    <property type="project" value="GO_Central"/>
</dbReference>
<dbReference type="GO" id="GO:0006412">
    <property type="term" value="P:translation"/>
    <property type="evidence" value="ECO:0007669"/>
    <property type="project" value="InterPro"/>
</dbReference>
<dbReference type="FunFam" id="2.20.25.100:FF:000001">
    <property type="entry name" value="40S ribosomal protein S27"/>
    <property type="match status" value="1"/>
</dbReference>
<dbReference type="Gene3D" id="2.20.25.100">
    <property type="entry name" value="Zn-binding ribosomal proteins"/>
    <property type="match status" value="1"/>
</dbReference>
<dbReference type="HAMAP" id="MF_00371">
    <property type="entry name" value="Ribosomal_eS27"/>
    <property type="match status" value="1"/>
</dbReference>
<dbReference type="InterPro" id="IPR000592">
    <property type="entry name" value="Ribosomal_eS27"/>
</dbReference>
<dbReference type="InterPro" id="IPR023407">
    <property type="entry name" value="Ribosomal_eS27_Zn-bd_dom_sf"/>
</dbReference>
<dbReference type="InterPro" id="IPR011332">
    <property type="entry name" value="Ribosomal_zn-bd"/>
</dbReference>
<dbReference type="PANTHER" id="PTHR11594">
    <property type="entry name" value="40S RIBOSOMAL PROTEIN S27"/>
    <property type="match status" value="1"/>
</dbReference>
<dbReference type="Pfam" id="PF01667">
    <property type="entry name" value="Ribosomal_S27e"/>
    <property type="match status" value="1"/>
</dbReference>
<dbReference type="SUPFAM" id="SSF57829">
    <property type="entry name" value="Zn-binding ribosomal proteins"/>
    <property type="match status" value="1"/>
</dbReference>
<protein>
    <recommendedName>
        <fullName evidence="3">Small ribosomal subunit protein eS27</fullName>
    </recommendedName>
    <alternativeName>
        <fullName>40S ribosomal protein S27</fullName>
    </alternativeName>
    <alternativeName>
        <fullName>Cytoplasmic ribosomal protein 6</fullName>
    </alternativeName>
</protein>
<reference key="1">
    <citation type="journal article" date="2003" name="Nature">
        <title>The genome sequence of the filamentous fungus Neurospora crassa.</title>
        <authorList>
            <person name="Galagan J.E."/>
            <person name="Calvo S.E."/>
            <person name="Borkovich K.A."/>
            <person name="Selker E.U."/>
            <person name="Read N.D."/>
            <person name="Jaffe D.B."/>
            <person name="FitzHugh W."/>
            <person name="Ma L.-J."/>
            <person name="Smirnov S."/>
            <person name="Purcell S."/>
            <person name="Rehman B."/>
            <person name="Elkins T."/>
            <person name="Engels R."/>
            <person name="Wang S."/>
            <person name="Nielsen C.B."/>
            <person name="Butler J."/>
            <person name="Endrizzi M."/>
            <person name="Qui D."/>
            <person name="Ianakiev P."/>
            <person name="Bell-Pedersen D."/>
            <person name="Nelson M.A."/>
            <person name="Werner-Washburne M."/>
            <person name="Selitrennikoff C.P."/>
            <person name="Kinsey J.A."/>
            <person name="Braun E.L."/>
            <person name="Zelter A."/>
            <person name="Schulte U."/>
            <person name="Kothe G.O."/>
            <person name="Jedd G."/>
            <person name="Mewes H.-W."/>
            <person name="Staben C."/>
            <person name="Marcotte E."/>
            <person name="Greenberg D."/>
            <person name="Roy A."/>
            <person name="Foley K."/>
            <person name="Naylor J."/>
            <person name="Stange-Thomann N."/>
            <person name="Barrett R."/>
            <person name="Gnerre S."/>
            <person name="Kamal M."/>
            <person name="Kamvysselis M."/>
            <person name="Mauceli E.W."/>
            <person name="Bielke C."/>
            <person name="Rudd S."/>
            <person name="Frishman D."/>
            <person name="Krystofova S."/>
            <person name="Rasmussen C."/>
            <person name="Metzenberg R.L."/>
            <person name="Perkins D.D."/>
            <person name="Kroken S."/>
            <person name="Cogoni C."/>
            <person name="Macino G."/>
            <person name="Catcheside D.E.A."/>
            <person name="Li W."/>
            <person name="Pratt R.J."/>
            <person name="Osmani S.A."/>
            <person name="DeSouza C.P.C."/>
            <person name="Glass N.L."/>
            <person name="Orbach M.J."/>
            <person name="Berglund J.A."/>
            <person name="Voelker R."/>
            <person name="Yarden O."/>
            <person name="Plamann M."/>
            <person name="Seiler S."/>
            <person name="Dunlap J.C."/>
            <person name="Radford A."/>
            <person name="Aramayo R."/>
            <person name="Natvig D.O."/>
            <person name="Alex L.A."/>
            <person name="Mannhaupt G."/>
            <person name="Ebbole D.J."/>
            <person name="Freitag M."/>
            <person name="Paulsen I."/>
            <person name="Sachs M.S."/>
            <person name="Lander E.S."/>
            <person name="Nusbaum C."/>
            <person name="Birren B.W."/>
        </authorList>
    </citation>
    <scope>NUCLEOTIDE SEQUENCE [LARGE SCALE GENOMIC DNA]</scope>
    <source>
        <strain>ATCC 24698 / 74-OR23-1A / CBS 708.71 / DSM 1257 / FGSC 987</strain>
    </source>
</reference>
<reference evidence="6" key="2">
    <citation type="journal article" date="2021" name="Proc. Natl. Acad. Sci. U.S.A.">
        <title>Structure of the translating Neurospora ribosome arrested by cycloheximide.</title>
        <authorList>
            <person name="Shen L."/>
            <person name="Su Z."/>
            <person name="Yang K."/>
            <person name="Wu C."/>
            <person name="Becker T."/>
            <person name="Bell-Pedersen D."/>
            <person name="Zhang J."/>
            <person name="Sachs M.S."/>
        </authorList>
    </citation>
    <scope>STRUCTURE BY ELECTRON MICROSCOPY (2.70 ANGSTROMS)</scope>
</reference>
<organism>
    <name type="scientific">Neurospora crassa (strain ATCC 24698 / 74-OR23-1A / CBS 708.71 / DSM 1257 / FGSC 987)</name>
    <dbReference type="NCBI Taxonomy" id="367110"/>
    <lineage>
        <taxon>Eukaryota</taxon>
        <taxon>Fungi</taxon>
        <taxon>Dikarya</taxon>
        <taxon>Ascomycota</taxon>
        <taxon>Pezizomycotina</taxon>
        <taxon>Sordariomycetes</taxon>
        <taxon>Sordariomycetidae</taxon>
        <taxon>Sordariales</taxon>
        <taxon>Sordariaceae</taxon>
        <taxon>Neurospora</taxon>
    </lineage>
</organism>
<keyword id="KW-0002">3D-structure</keyword>
<keyword id="KW-0963">Cytoplasm</keyword>
<keyword id="KW-0479">Metal-binding</keyword>
<keyword id="KW-1185">Reference proteome</keyword>
<keyword id="KW-0687">Ribonucleoprotein</keyword>
<keyword id="KW-0689">Ribosomal protein</keyword>
<keyword id="KW-0862">Zinc</keyword>
<keyword id="KW-0863">Zinc-finger</keyword>